<evidence type="ECO:0000250" key="1">
    <source>
        <dbReference type="UniProtKB" id="A0A1E3P8S6"/>
    </source>
</evidence>
<evidence type="ECO:0000255" key="2"/>
<evidence type="ECO:0000256" key="3">
    <source>
        <dbReference type="SAM" id="MobiDB-lite"/>
    </source>
</evidence>
<evidence type="ECO:0000269" key="4">
    <source>
    </source>
</evidence>
<evidence type="ECO:0000269" key="5">
    <source>
    </source>
</evidence>
<evidence type="ECO:0000305" key="6"/>
<keyword id="KW-0378">Hydrolase</keyword>
<keyword id="KW-0496">Mitochondrion</keyword>
<keyword id="KW-1185">Reference proteome</keyword>
<keyword id="KW-0808">Transferase</keyword>
<keyword id="KW-0809">Transit peptide</keyword>
<sequence>MFLSLRPSLSVSRLAVVRRAYSSPASKKQINDGLVPLPHKEVIDMAFDLHLPERSVIGKLPYHSPEPIIFFHGLLGSKRNYKHDCKKLATALQTPVYTVDVRNHGSSEHALPFNYGTLVNDLVHFIHQHKLGKVNIIGYSLGAKVGMLACLKHPELFSAACIIDNAPEPQPHIKAFLSTLIKSCVKLLDQGKVRVDDKLWRHKASESLKRYLPNAGVRNYVLNNIVHNPRVVEYRSPVINYDDGLIHFKNPVRHMLDCGVKDVADWPTEEVKDKKFLGPVNFIRATKSAFINPDSLKAINSFFPFNNIHEINATHFVLNERPQEYLRAVIDFFKVTRYQLENKRNKDPNNYMQTQNSISNSDTMGQSL</sequence>
<feature type="transit peptide" description="Mitochondrion" evidence="2">
    <location>
        <begin position="1"/>
        <end position="21"/>
    </location>
</feature>
<feature type="chain" id="PRO_0000446180" description="Ethanol acetyltransferase 1">
    <location>
        <begin position="22"/>
        <end position="368"/>
    </location>
</feature>
<feature type="domain" description="AB hydrolase-1" evidence="2">
    <location>
        <begin position="67"/>
        <end position="171"/>
    </location>
</feature>
<feature type="region of interest" description="Disordered" evidence="3">
    <location>
        <begin position="344"/>
        <end position="368"/>
    </location>
</feature>
<feature type="compositionally biased region" description="Polar residues" evidence="3">
    <location>
        <begin position="348"/>
        <end position="368"/>
    </location>
</feature>
<feature type="active site" description="Charge relay system" evidence="1">
    <location>
        <position position="140"/>
    </location>
</feature>
<feature type="active site" description="Charge relay system" evidence="1">
    <location>
        <position position="164"/>
    </location>
</feature>
<feature type="active site" description="Charge relay system" evidence="1">
    <location>
        <position position="315"/>
    </location>
</feature>
<comment type="function">
    <text evidence="1 4">Alcohol acetyltransferase that catalyzes the synthesis of ethyl acetate from ethanol and acetyl-CoA (PubMed:28356220). Can also function as a thioesterase by hydrolyzing acetyl-CoA in the absence of ethanol, as well as esterase hydrolyzing ethyl acetate (By similarity).</text>
</comment>
<comment type="catalytic activity">
    <reaction evidence="4">
        <text>ethanol + acetyl-CoA = ethyl acetate + CoA</text>
        <dbReference type="Rhea" id="RHEA:55972"/>
        <dbReference type="ChEBI" id="CHEBI:16236"/>
        <dbReference type="ChEBI" id="CHEBI:27750"/>
        <dbReference type="ChEBI" id="CHEBI:57287"/>
        <dbReference type="ChEBI" id="CHEBI:57288"/>
        <dbReference type="EC" id="2.3.1.268"/>
    </reaction>
</comment>
<comment type="catalytic activity">
    <reaction evidence="1">
        <text>acetyl-CoA + H2O = acetate + CoA + H(+)</text>
        <dbReference type="Rhea" id="RHEA:20289"/>
        <dbReference type="ChEBI" id="CHEBI:15377"/>
        <dbReference type="ChEBI" id="CHEBI:15378"/>
        <dbReference type="ChEBI" id="CHEBI:30089"/>
        <dbReference type="ChEBI" id="CHEBI:57287"/>
        <dbReference type="ChEBI" id="CHEBI:57288"/>
        <dbReference type="EC" id="3.1.2.1"/>
    </reaction>
</comment>
<comment type="catalytic activity">
    <reaction evidence="1">
        <text>ethyl acetate + H2O = ethanol + acetate + H(+)</text>
        <dbReference type="Rhea" id="RHEA:58148"/>
        <dbReference type="ChEBI" id="CHEBI:15377"/>
        <dbReference type="ChEBI" id="CHEBI:15378"/>
        <dbReference type="ChEBI" id="CHEBI:16236"/>
        <dbReference type="ChEBI" id="CHEBI:27750"/>
        <dbReference type="ChEBI" id="CHEBI:30089"/>
    </reaction>
</comment>
<comment type="subcellular location">
    <subcellularLocation>
        <location evidence="5">Mitochondrion</location>
    </subcellularLocation>
</comment>
<comment type="disruption phenotype">
    <text evidence="4">Reduces ethyl acetate production by at least 80%.</text>
</comment>
<comment type="similarity">
    <text evidence="6">Belongs to the AB hydrolase superfamily.</text>
</comment>
<name>EAT1_KLULA</name>
<protein>
    <recommendedName>
        <fullName>Ethanol acetyltransferase 1</fullName>
        <ecNumber>2.3.1.268</ecNumber>
    </recommendedName>
    <alternativeName>
        <fullName>Acetyl-CoA hydrolase</fullName>
        <ecNumber>3.1.2.1</ecNumber>
    </alternativeName>
    <alternativeName>
        <fullName>Acetyl-CoA thioesterase</fullName>
    </alternativeName>
    <alternativeName>
        <fullName>Alcohol acetyltransferase</fullName>
        <shortName>AAT</shortName>
    </alternativeName>
    <alternativeName>
        <fullName>Ethyl acetate esterase</fullName>
        <ecNumber>3.1.1.-</ecNumber>
    </alternativeName>
</protein>
<proteinExistence type="evidence at protein level"/>
<organism>
    <name type="scientific">Kluyveromyces lactis (strain ATCC 8585 / CBS 2359 / DSM 70799 / NBRC 1267 / NRRL Y-1140 / WM37)</name>
    <name type="common">Yeast</name>
    <name type="synonym">Candida sphaerica</name>
    <dbReference type="NCBI Taxonomy" id="284590"/>
    <lineage>
        <taxon>Eukaryota</taxon>
        <taxon>Fungi</taxon>
        <taxon>Dikarya</taxon>
        <taxon>Ascomycota</taxon>
        <taxon>Saccharomycotina</taxon>
        <taxon>Saccharomycetes</taxon>
        <taxon>Saccharomycetales</taxon>
        <taxon>Saccharomycetaceae</taxon>
        <taxon>Kluyveromyces</taxon>
    </lineage>
</organism>
<gene>
    <name type="primary">EAT1</name>
    <name type="ordered locus">KLLA0_E24421g</name>
</gene>
<reference key="1">
    <citation type="journal article" date="2004" name="Nature">
        <title>Genome evolution in yeasts.</title>
        <authorList>
            <person name="Dujon B."/>
            <person name="Sherman D."/>
            <person name="Fischer G."/>
            <person name="Durrens P."/>
            <person name="Casaregola S."/>
            <person name="Lafontaine I."/>
            <person name="de Montigny J."/>
            <person name="Marck C."/>
            <person name="Neuveglise C."/>
            <person name="Talla E."/>
            <person name="Goffard N."/>
            <person name="Frangeul L."/>
            <person name="Aigle M."/>
            <person name="Anthouard V."/>
            <person name="Babour A."/>
            <person name="Barbe V."/>
            <person name="Barnay S."/>
            <person name="Blanchin S."/>
            <person name="Beckerich J.-M."/>
            <person name="Beyne E."/>
            <person name="Bleykasten C."/>
            <person name="Boisrame A."/>
            <person name="Boyer J."/>
            <person name="Cattolico L."/>
            <person name="Confanioleri F."/>
            <person name="de Daruvar A."/>
            <person name="Despons L."/>
            <person name="Fabre E."/>
            <person name="Fairhead C."/>
            <person name="Ferry-Dumazet H."/>
            <person name="Groppi A."/>
            <person name="Hantraye F."/>
            <person name="Hennequin C."/>
            <person name="Jauniaux N."/>
            <person name="Joyet P."/>
            <person name="Kachouri R."/>
            <person name="Kerrest A."/>
            <person name="Koszul R."/>
            <person name="Lemaire M."/>
            <person name="Lesur I."/>
            <person name="Ma L."/>
            <person name="Muller H."/>
            <person name="Nicaud J.-M."/>
            <person name="Nikolski M."/>
            <person name="Oztas S."/>
            <person name="Ozier-Kalogeropoulos O."/>
            <person name="Pellenz S."/>
            <person name="Potier S."/>
            <person name="Richard G.-F."/>
            <person name="Straub M.-L."/>
            <person name="Suleau A."/>
            <person name="Swennen D."/>
            <person name="Tekaia F."/>
            <person name="Wesolowski-Louvel M."/>
            <person name="Westhof E."/>
            <person name="Wirth B."/>
            <person name="Zeniou-Meyer M."/>
            <person name="Zivanovic Y."/>
            <person name="Bolotin-Fukuhara M."/>
            <person name="Thierry A."/>
            <person name="Bouchier C."/>
            <person name="Caudron B."/>
            <person name="Scarpelli C."/>
            <person name="Gaillardin C."/>
            <person name="Weissenbach J."/>
            <person name="Wincker P."/>
            <person name="Souciet J.-L."/>
        </authorList>
    </citation>
    <scope>NUCLEOTIDE SEQUENCE [LARGE SCALE GENOMIC DNA]</scope>
    <source>
        <strain>ATCC 8585 / CBS 2359 / DSM 70799 / NBRC 1267 / NRRL Y-1140 / WM37</strain>
    </source>
</reference>
<reference key="2">
    <citation type="journal article" date="2017" name="Metab. Eng.">
        <title>Ethyl acetate production by the elusive alcohol acetyltransferase from yeast.</title>
        <authorList>
            <person name="Kruis A.J."/>
            <person name="Levisson M."/>
            <person name="Mars A.E."/>
            <person name="van der Ploeg M."/>
            <person name="Garces Daza F."/>
            <person name="Ellena V."/>
            <person name="Kengen S.W.M."/>
            <person name="van der Oost J."/>
            <person name="Weusthuis R.A."/>
        </authorList>
    </citation>
    <scope>FUNCTION</scope>
    <scope>CATALYTIC ACTIVITY</scope>
    <scope>DISRUPTION PHENOTYPE</scope>
    <source>
        <strain>ATCC 8585 / CBS 2359 / DSM 70799 / NBRC 1267 / NRRL Y-1140 / WM37</strain>
    </source>
</reference>
<reference key="3">
    <citation type="journal article" date="2018" name="Appl. Environ. Microbiol.">
        <title>Alcohol acetyltransferase Eat1 is located in yeast mitochondria.</title>
        <authorList>
            <person name="Kruis A.J."/>
            <person name="Mars A.E."/>
            <person name="Kengen S.W.M."/>
            <person name="Borst J.W."/>
            <person name="van der Oost J."/>
            <person name="Weusthuis R.A."/>
        </authorList>
    </citation>
    <scope>SUBCELLULAR LOCATION</scope>
    <source>
        <strain>ATCC 8585 / CBS 2359 / DSM 70799 / NBRC 1267 / NRRL Y-1140 / WM37</strain>
    </source>
</reference>
<accession>Q6CLY8</accession>
<dbReference type="EC" id="2.3.1.268"/>
<dbReference type="EC" id="3.1.2.1"/>
<dbReference type="EC" id="3.1.1.-"/>
<dbReference type="EMBL" id="CR382125">
    <property type="protein sequence ID" value="CAH00138.1"/>
    <property type="molecule type" value="Genomic_DNA"/>
</dbReference>
<dbReference type="RefSeq" id="XP_455051.1">
    <property type="nucleotide sequence ID" value="XM_455051.1"/>
</dbReference>
<dbReference type="SMR" id="Q6CLY8"/>
<dbReference type="STRING" id="284590.Q6CLY8"/>
<dbReference type="ESTHER" id="klula-q6cly8">
    <property type="family name" value="ABHD11-Acetyl_transferase"/>
</dbReference>
<dbReference type="PaxDb" id="284590-Q6CLY8"/>
<dbReference type="GeneID" id="2894336"/>
<dbReference type="KEGG" id="kla:KLLA0_E24421g"/>
<dbReference type="eggNOG" id="KOG2382">
    <property type="taxonomic scope" value="Eukaryota"/>
</dbReference>
<dbReference type="HOGENOM" id="CLU_020336_53_0_1"/>
<dbReference type="InParanoid" id="Q6CLY8"/>
<dbReference type="OMA" id="FFVDSIC"/>
<dbReference type="BRENDA" id="2.3.1.268">
    <property type="organism ID" value="2825"/>
</dbReference>
<dbReference type="Proteomes" id="UP000000598">
    <property type="component" value="Chromosome E"/>
</dbReference>
<dbReference type="GO" id="GO:0005739">
    <property type="term" value="C:mitochondrion"/>
    <property type="evidence" value="ECO:0007669"/>
    <property type="project" value="UniProtKB-SubCell"/>
</dbReference>
<dbReference type="GO" id="GO:0003986">
    <property type="term" value="F:acetyl-CoA hydrolase activity"/>
    <property type="evidence" value="ECO:0007669"/>
    <property type="project" value="UniProtKB-EC"/>
</dbReference>
<dbReference type="GO" id="GO:0052689">
    <property type="term" value="F:carboxylic ester hydrolase activity"/>
    <property type="evidence" value="ECO:0007669"/>
    <property type="project" value="TreeGrafter"/>
</dbReference>
<dbReference type="GO" id="GO:0016740">
    <property type="term" value="F:transferase activity"/>
    <property type="evidence" value="ECO:0007669"/>
    <property type="project" value="UniProtKB-KW"/>
</dbReference>
<dbReference type="Gene3D" id="3.40.50.1820">
    <property type="entry name" value="alpha/beta hydrolase"/>
    <property type="match status" value="1"/>
</dbReference>
<dbReference type="InterPro" id="IPR000073">
    <property type="entry name" value="AB_hydrolase_1"/>
</dbReference>
<dbReference type="InterPro" id="IPR029058">
    <property type="entry name" value="AB_hydrolase_fold"/>
</dbReference>
<dbReference type="PANTHER" id="PTHR46118">
    <property type="entry name" value="PROTEIN ABHD11"/>
    <property type="match status" value="1"/>
</dbReference>
<dbReference type="PANTHER" id="PTHR46118:SF4">
    <property type="entry name" value="PROTEIN ABHD11"/>
    <property type="match status" value="1"/>
</dbReference>
<dbReference type="Pfam" id="PF00561">
    <property type="entry name" value="Abhydrolase_1"/>
    <property type="match status" value="1"/>
</dbReference>
<dbReference type="SUPFAM" id="SSF53474">
    <property type="entry name" value="alpha/beta-Hydrolases"/>
    <property type="match status" value="1"/>
</dbReference>